<sequence length="146" mass="16823">MQGLSFTFSAVTLFLVLCLQLGIIESQDDENVRKPLLIEIDVPSTAQENQEITVQVTVETQYRECMVIKAYLVSNEPMEGAFNYVQTRCLCNDHPIRFFWDIIITRTVTFATVIDIVREKNICPNDMAVVPITANRYYTYNTVRMN</sequence>
<proteinExistence type="evidence at transcript level"/>
<feature type="signal peptide" evidence="1">
    <location>
        <begin position="1"/>
        <end position="26"/>
    </location>
</feature>
<feature type="chain" id="PRO_0000024290" description="Prolactin-inducible protein homolog">
    <location>
        <begin position="27"/>
        <end position="146"/>
    </location>
</feature>
<feature type="modified residue" description="Pyrrolidone carboxylic acid" evidence="2">
    <location>
        <position position="27"/>
    </location>
</feature>
<feature type="disulfide bond" evidence="1">
    <location>
        <begin position="65"/>
        <end position="91"/>
    </location>
</feature>
<feature type="disulfide bond" evidence="1">
    <location>
        <begin position="89"/>
        <end position="123"/>
    </location>
</feature>
<feature type="sequence conflict" description="In Ref. 2." evidence="3" ref="2">
    <original>MQGLSFTFSAVTLFLVLCLQL</original>
    <variation>MSAA</variation>
    <location>
        <begin position="1"/>
        <end position="21"/>
    </location>
</feature>
<feature type="sequence conflict" description="In Ref. 3; BAA75745/BAA75747." evidence="3" ref="3">
    <original>Q</original>
    <variation>K</variation>
    <location>
        <position position="2"/>
    </location>
</feature>
<feature type="sequence conflict" description="In Ref. 1; AAB31990." evidence="3" ref="1">
    <original>N</original>
    <variation>S</variation>
    <location>
        <position position="135"/>
    </location>
</feature>
<accession>P02816</accession>
<accession>Q64013</accession>
<accession>Q8K127</accession>
<accession>Q9QUG8</accession>
<organism>
    <name type="scientific">Mus musculus</name>
    <name type="common">Mouse</name>
    <dbReference type="NCBI Taxonomy" id="10090"/>
    <lineage>
        <taxon>Eukaryota</taxon>
        <taxon>Metazoa</taxon>
        <taxon>Chordata</taxon>
        <taxon>Craniata</taxon>
        <taxon>Vertebrata</taxon>
        <taxon>Euteleostomi</taxon>
        <taxon>Mammalia</taxon>
        <taxon>Eutheria</taxon>
        <taxon>Euarchontoglires</taxon>
        <taxon>Glires</taxon>
        <taxon>Rodentia</taxon>
        <taxon>Myomorpha</taxon>
        <taxon>Muroidea</taxon>
        <taxon>Muridae</taxon>
        <taxon>Murinae</taxon>
        <taxon>Mus</taxon>
        <taxon>Mus</taxon>
    </lineage>
</organism>
<name>PIP_MOUSE</name>
<keyword id="KW-1015">Disulfide bond</keyword>
<keyword id="KW-0873">Pyrrolidone carboxylic acid</keyword>
<keyword id="KW-1185">Reference proteome</keyword>
<keyword id="KW-0964">Secreted</keyword>
<keyword id="KW-0732">Signal</keyword>
<dbReference type="EMBL" id="S73282">
    <property type="protein sequence ID" value="AAB31990.2"/>
    <property type="molecule type" value="mRNA"/>
</dbReference>
<dbReference type="EMBL" id="X02510">
    <property type="protein sequence ID" value="CAA26346.1"/>
    <property type="molecule type" value="mRNA"/>
</dbReference>
<dbReference type="EMBL" id="AB017907">
    <property type="protein sequence ID" value="BAA75745.1"/>
    <property type="molecule type" value="mRNA"/>
</dbReference>
<dbReference type="EMBL" id="AB017918">
    <property type="protein sequence ID" value="BAA75747.1"/>
    <property type="molecule type" value="Genomic_DNA"/>
</dbReference>
<dbReference type="EMBL" id="BC028889">
    <property type="protein sequence ID" value="AAH28889.1"/>
    <property type="molecule type" value="mRNA"/>
</dbReference>
<dbReference type="CCDS" id="CCDS39469.1"/>
<dbReference type="PIR" id="A03299">
    <property type="entry name" value="WMMS14"/>
</dbReference>
<dbReference type="RefSeq" id="NP_032869.2">
    <property type="nucleotide sequence ID" value="NM_008843.4"/>
</dbReference>
<dbReference type="SMR" id="P02816"/>
<dbReference type="FunCoup" id="P02816">
    <property type="interactions" value="41"/>
</dbReference>
<dbReference type="STRING" id="10090.ENSMUSP00000074818"/>
<dbReference type="PhosphoSitePlus" id="P02816"/>
<dbReference type="jPOST" id="P02816"/>
<dbReference type="PaxDb" id="10090-ENSMUSP00000074818"/>
<dbReference type="ProteomicsDB" id="288167"/>
<dbReference type="Antibodypedia" id="2216">
    <property type="antibodies" value="637 antibodies from 40 providers"/>
</dbReference>
<dbReference type="Ensembl" id="ENSMUST00000075351.10">
    <property type="protein sequence ID" value="ENSMUSP00000074818.8"/>
    <property type="gene ID" value="ENSMUSG00000058499.10"/>
</dbReference>
<dbReference type="GeneID" id="18716"/>
<dbReference type="KEGG" id="mmu:18716"/>
<dbReference type="UCSC" id="uc009bqh.1">
    <property type="organism name" value="mouse"/>
</dbReference>
<dbReference type="AGR" id="MGI:102696"/>
<dbReference type="CTD" id="5304"/>
<dbReference type="MGI" id="MGI:102696">
    <property type="gene designation" value="Pip"/>
</dbReference>
<dbReference type="VEuPathDB" id="HostDB:ENSMUSG00000058499"/>
<dbReference type="eggNOG" id="ENOG502T2PG">
    <property type="taxonomic scope" value="Eukaryota"/>
</dbReference>
<dbReference type="GeneTree" id="ENSGT00390000002099"/>
<dbReference type="HOGENOM" id="CLU_148761_0_0_1"/>
<dbReference type="InParanoid" id="P02816"/>
<dbReference type="OMA" id="ECMVIKT"/>
<dbReference type="OrthoDB" id="9835042at2759"/>
<dbReference type="PhylomeDB" id="P02816"/>
<dbReference type="TreeFam" id="TF336919"/>
<dbReference type="Reactome" id="R-MMU-5223345">
    <property type="pathway name" value="Miscellaneous transport and binding events"/>
</dbReference>
<dbReference type="BioGRID-ORCS" id="18716">
    <property type="hits" value="2 hits in 78 CRISPR screens"/>
</dbReference>
<dbReference type="ChiTaRS" id="Msmb">
    <property type="organism name" value="mouse"/>
</dbReference>
<dbReference type="PRO" id="PR:P02816"/>
<dbReference type="Proteomes" id="UP000000589">
    <property type="component" value="Chromosome 6"/>
</dbReference>
<dbReference type="RNAct" id="P02816">
    <property type="molecule type" value="protein"/>
</dbReference>
<dbReference type="Bgee" id="ENSMUSG00000058499">
    <property type="expression patterns" value="Expressed in parotid gland and 22 other cell types or tissues"/>
</dbReference>
<dbReference type="ExpressionAtlas" id="P02816">
    <property type="expression patterns" value="baseline and differential"/>
</dbReference>
<dbReference type="GO" id="GO:0016324">
    <property type="term" value="C:apical plasma membrane"/>
    <property type="evidence" value="ECO:0000314"/>
    <property type="project" value="MGI"/>
</dbReference>
<dbReference type="GO" id="GO:0005576">
    <property type="term" value="C:extracellular region"/>
    <property type="evidence" value="ECO:0000314"/>
    <property type="project" value="MGI"/>
</dbReference>
<dbReference type="GO" id="GO:0002682">
    <property type="term" value="P:regulation of immune system process"/>
    <property type="evidence" value="ECO:0000315"/>
    <property type="project" value="MGI"/>
</dbReference>
<dbReference type="FunFam" id="2.60.40.10:FF:001572">
    <property type="entry name" value="Prolactin-inducible protein homolog"/>
    <property type="match status" value="1"/>
</dbReference>
<dbReference type="Gene3D" id="2.60.40.10">
    <property type="entry name" value="Immunoglobulins"/>
    <property type="match status" value="1"/>
</dbReference>
<dbReference type="InterPro" id="IPR013783">
    <property type="entry name" value="Ig-like_fold"/>
</dbReference>
<dbReference type="InterPro" id="IPR014756">
    <property type="entry name" value="Ig_E-set"/>
</dbReference>
<dbReference type="InterPro" id="IPR007990">
    <property type="entry name" value="PIP"/>
</dbReference>
<dbReference type="PANTHER" id="PTHR15096:SF5">
    <property type="entry name" value="PROLACTIN-INDUCIBLE PROTEIN"/>
    <property type="match status" value="1"/>
</dbReference>
<dbReference type="PANTHER" id="PTHR15096">
    <property type="entry name" value="PROLACTIN-INDUCIBLE PROTEIN/SEMINAL VESICLE ANTIGEN"/>
    <property type="match status" value="1"/>
</dbReference>
<dbReference type="Pfam" id="PF05326">
    <property type="entry name" value="SVA"/>
    <property type="match status" value="1"/>
</dbReference>
<dbReference type="PIRSF" id="PIRSF002572">
    <property type="entry name" value="PIP-GCDFP-15"/>
    <property type="match status" value="1"/>
</dbReference>
<dbReference type="SUPFAM" id="SSF81296">
    <property type="entry name" value="E set domains"/>
    <property type="match status" value="1"/>
</dbReference>
<evidence type="ECO:0000250" key="1"/>
<evidence type="ECO:0000250" key="2">
    <source>
        <dbReference type="UniProtKB" id="P12273"/>
    </source>
</evidence>
<evidence type="ECO:0000305" key="3"/>
<protein>
    <recommendedName>
        <fullName>Prolactin-inducible protein homolog</fullName>
    </recommendedName>
    <alternativeName>
        <fullName>14 kDa submandibular gland protein</fullName>
        <shortName>SMGP</shortName>
    </alternativeName>
    <alternativeName>
        <fullName>Gross cystic disease fluid protein 15</fullName>
        <shortName>GCDFP-15</shortName>
    </alternativeName>
    <alternativeName>
        <fullName>Prolactin-induced protein</fullName>
    </alternativeName>
</protein>
<reference key="1">
    <citation type="journal article" date="1994" name="Endocrinology">
        <title>Tissue-specific androgen-inhibited gene expression of a submaxillary gland protein, a rodent homolog of the human prolactin-inducible protein/GCDFP-15 gene.</title>
        <authorList>
            <person name="Myal Y."/>
            <person name="Iwasiow B."/>
            <person name="Yarmill A."/>
            <person name="Harrison E."/>
            <person name="Paterson J.A."/>
            <person name="Shiu R.P."/>
        </authorList>
    </citation>
    <scope>NUCLEOTIDE SEQUENCE [MRNA]</scope>
    <source>
        <tissue>Submandibular gland</tissue>
    </source>
</reference>
<reference key="2">
    <citation type="journal article" date="1984" name="Nucleic Acids Res.">
        <title>Molecular cloning of cDNAs from androgen-independent mRNA species of DBA/2 mouse sub-maxillary glands.</title>
        <authorList>
            <person name="Windass J.D."/>
            <person name="Mullins J.J."/>
            <person name="Beecroft L.J."/>
            <person name="George H."/>
            <person name="Meacock P.A."/>
            <person name="Williams B.R.G."/>
            <person name="Brammar W.J."/>
        </authorList>
    </citation>
    <scope>NUCLEOTIDE SEQUENCE</scope>
    <source>
        <tissue>Submandibular gland</tissue>
    </source>
</reference>
<reference key="3">
    <citation type="submission" date="1998-09" db="EMBL/GenBank/DDBJ databases">
        <title>Human gross cystic disease fluid protein 15 homologue in mice: sequential and structural similarities to the mouse seminal vesicle autoantigen.</title>
        <authorList>
            <person name="Osawa M."/>
            <person name="Huang X."/>
            <person name="Yukawa N."/>
            <person name="Saito T."/>
            <person name="Kusakabe T."/>
            <person name="Takeichi S."/>
        </authorList>
    </citation>
    <scope>NUCLEOTIDE SEQUENCE [GENOMIC DNA / MRNA]</scope>
    <source>
        <strain>DBA-2</strain>
    </source>
</reference>
<reference key="4">
    <citation type="journal article" date="2004" name="Genome Res.">
        <title>The status, quality, and expansion of the NIH full-length cDNA project: the Mammalian Gene Collection (MGC).</title>
        <authorList>
            <consortium name="The MGC Project Team"/>
        </authorList>
    </citation>
    <scope>NUCLEOTIDE SEQUENCE [LARGE SCALE MRNA]</scope>
    <source>
        <tissue>Salivary gland</tissue>
    </source>
</reference>
<gene>
    <name type="primary">Pip</name>
</gene>
<comment type="subunit">
    <text evidence="1">Monomer. Interacts with AZGP1 (By similarity).</text>
</comment>
<comment type="subcellular location">
    <subcellularLocation>
        <location evidence="3">Secreted</location>
    </subcellularLocation>
</comment>
<comment type="tissue specificity">
    <text>Lacrimal and submaxillary glands.</text>
</comment>
<comment type="similarity">
    <text evidence="3">Belongs to the PIP family.</text>
</comment>